<comment type="function">
    <text evidence="1">Specifically methylates the adenine in position 1618 of 23S rRNA.</text>
</comment>
<comment type="catalytic activity">
    <reaction evidence="1">
        <text>adenosine(1618) in 23S rRNA + S-adenosyl-L-methionine = N(6)-methyladenosine(1618) in 23S rRNA + S-adenosyl-L-homocysteine + H(+)</text>
        <dbReference type="Rhea" id="RHEA:16497"/>
        <dbReference type="Rhea" id="RHEA-COMP:10229"/>
        <dbReference type="Rhea" id="RHEA-COMP:10231"/>
        <dbReference type="ChEBI" id="CHEBI:15378"/>
        <dbReference type="ChEBI" id="CHEBI:57856"/>
        <dbReference type="ChEBI" id="CHEBI:59789"/>
        <dbReference type="ChEBI" id="CHEBI:74411"/>
        <dbReference type="ChEBI" id="CHEBI:74449"/>
        <dbReference type="EC" id="2.1.1.181"/>
    </reaction>
</comment>
<comment type="subcellular location">
    <subcellularLocation>
        <location evidence="1">Cytoplasm</location>
    </subcellularLocation>
</comment>
<comment type="similarity">
    <text evidence="1">Belongs to the methyltransferase superfamily. METTL16/RlmF family.</text>
</comment>
<dbReference type="EC" id="2.1.1.181" evidence="1"/>
<dbReference type="EMBL" id="CP000304">
    <property type="protein sequence ID" value="ABP80706.1"/>
    <property type="molecule type" value="Genomic_DNA"/>
</dbReference>
<dbReference type="RefSeq" id="WP_011914159.1">
    <property type="nucleotide sequence ID" value="NC_009434.1"/>
</dbReference>
<dbReference type="SMR" id="A4VP05"/>
<dbReference type="KEGG" id="psa:PST_3066"/>
<dbReference type="eggNOG" id="COG3129">
    <property type="taxonomic scope" value="Bacteria"/>
</dbReference>
<dbReference type="HOGENOM" id="CLU_027534_3_0_6"/>
<dbReference type="Proteomes" id="UP000000233">
    <property type="component" value="Chromosome"/>
</dbReference>
<dbReference type="GO" id="GO:0005737">
    <property type="term" value="C:cytoplasm"/>
    <property type="evidence" value="ECO:0007669"/>
    <property type="project" value="UniProtKB-SubCell"/>
</dbReference>
<dbReference type="GO" id="GO:0052907">
    <property type="term" value="F:23S rRNA (adenine(1618)-N(6))-methyltransferase activity"/>
    <property type="evidence" value="ECO:0007669"/>
    <property type="project" value="UniProtKB-EC"/>
</dbReference>
<dbReference type="GO" id="GO:0070475">
    <property type="term" value="P:rRNA base methylation"/>
    <property type="evidence" value="ECO:0007669"/>
    <property type="project" value="TreeGrafter"/>
</dbReference>
<dbReference type="CDD" id="cd02440">
    <property type="entry name" value="AdoMet_MTases"/>
    <property type="match status" value="1"/>
</dbReference>
<dbReference type="Gene3D" id="3.40.50.150">
    <property type="entry name" value="Vaccinia Virus protein VP39"/>
    <property type="match status" value="1"/>
</dbReference>
<dbReference type="HAMAP" id="MF_01848">
    <property type="entry name" value="23SrRNA_methyltr_F"/>
    <property type="match status" value="1"/>
</dbReference>
<dbReference type="InterPro" id="IPR010286">
    <property type="entry name" value="METTL16/RlmF"/>
</dbReference>
<dbReference type="InterPro" id="IPR016909">
    <property type="entry name" value="rRNA_lsu_MeTfrase_F"/>
</dbReference>
<dbReference type="InterPro" id="IPR029063">
    <property type="entry name" value="SAM-dependent_MTases_sf"/>
</dbReference>
<dbReference type="NCBIfam" id="NF008725">
    <property type="entry name" value="PRK11727.1"/>
    <property type="match status" value="1"/>
</dbReference>
<dbReference type="PANTHER" id="PTHR13393:SF0">
    <property type="entry name" value="RNA N6-ADENOSINE-METHYLTRANSFERASE METTL16"/>
    <property type="match status" value="1"/>
</dbReference>
<dbReference type="PANTHER" id="PTHR13393">
    <property type="entry name" value="SAM-DEPENDENT METHYLTRANSFERASE"/>
    <property type="match status" value="1"/>
</dbReference>
<dbReference type="Pfam" id="PF05971">
    <property type="entry name" value="Methyltransf_10"/>
    <property type="match status" value="1"/>
</dbReference>
<dbReference type="PIRSF" id="PIRSF029038">
    <property type="entry name" value="Mtase_YbiN_prd"/>
    <property type="match status" value="1"/>
</dbReference>
<dbReference type="SUPFAM" id="SSF53335">
    <property type="entry name" value="S-adenosyl-L-methionine-dependent methyltransferases"/>
    <property type="match status" value="1"/>
</dbReference>
<protein>
    <recommendedName>
        <fullName evidence="1">Ribosomal RNA large subunit methyltransferase F</fullName>
        <ecNumber evidence="1">2.1.1.181</ecNumber>
    </recommendedName>
    <alternativeName>
        <fullName evidence="1">23S rRNA mA1618 methyltransferase</fullName>
    </alternativeName>
    <alternativeName>
        <fullName evidence="1">rRNA adenine N-6-methyltransferase</fullName>
    </alternativeName>
</protein>
<reference key="1">
    <citation type="journal article" date="2008" name="Proc. Natl. Acad. Sci. U.S.A.">
        <title>Nitrogen fixation island and rhizosphere competence traits in the genome of root-associated Pseudomonas stutzeri A1501.</title>
        <authorList>
            <person name="Yan Y."/>
            <person name="Yang J."/>
            <person name="Dou Y."/>
            <person name="Chen M."/>
            <person name="Ping S."/>
            <person name="Peng J."/>
            <person name="Lu W."/>
            <person name="Zhang W."/>
            <person name="Yao Z."/>
            <person name="Li H."/>
            <person name="Liu W."/>
            <person name="He S."/>
            <person name="Geng L."/>
            <person name="Zhang X."/>
            <person name="Yang F."/>
            <person name="Yu H."/>
            <person name="Zhan Y."/>
            <person name="Li D."/>
            <person name="Lin Z."/>
            <person name="Wang Y."/>
            <person name="Elmerich C."/>
            <person name="Lin M."/>
            <person name="Jin Q."/>
        </authorList>
    </citation>
    <scope>NUCLEOTIDE SEQUENCE [LARGE SCALE GENOMIC DNA]</scope>
    <source>
        <strain>A1501</strain>
    </source>
</reference>
<sequence length="327" mass="36199">MPRKTSSQPRPAEPKAVLHPRNRHSGRYDFPKLIAACPELGEYVILNPYGKQSIDFANPDAVRVFNRALLRQFYGIQHWDIPAGYLCPPVPGRADYLHGLADLLAADNAGVIPRGAAVRVLDIGTGANCIYPLIGHREYGWRFTGSDIDATALASARTIVAANRLDKVIELRRQDTSTQLFKGILAADERFELTLCNPPFHASQAEAASGSQRKWRNLGKLDPSRKLPKLNFGGQAAELWCEGGEAAFVARMADESVAYAKQVYRFSTLVSKGGNVAPLMVRLQRLGALQVQALDMAQGQKKSRFVTWTFLDAAEQAAWRTERWPRS</sequence>
<evidence type="ECO:0000255" key="1">
    <source>
        <dbReference type="HAMAP-Rule" id="MF_01848"/>
    </source>
</evidence>
<evidence type="ECO:0000256" key="2">
    <source>
        <dbReference type="SAM" id="MobiDB-lite"/>
    </source>
</evidence>
<name>RLMF_STUS1</name>
<organism>
    <name type="scientific">Stutzerimonas stutzeri (strain A1501)</name>
    <name type="common">Pseudomonas stutzeri</name>
    <dbReference type="NCBI Taxonomy" id="379731"/>
    <lineage>
        <taxon>Bacteria</taxon>
        <taxon>Pseudomonadati</taxon>
        <taxon>Pseudomonadota</taxon>
        <taxon>Gammaproteobacteria</taxon>
        <taxon>Pseudomonadales</taxon>
        <taxon>Pseudomonadaceae</taxon>
        <taxon>Stutzerimonas</taxon>
    </lineage>
</organism>
<feature type="chain" id="PRO_0000349936" description="Ribosomal RNA large subunit methyltransferase F">
    <location>
        <begin position="1"/>
        <end position="327"/>
    </location>
</feature>
<feature type="region of interest" description="Disordered" evidence="2">
    <location>
        <begin position="1"/>
        <end position="24"/>
    </location>
</feature>
<gene>
    <name evidence="1" type="primary">rlmF</name>
    <name type="ordered locus">PST_3066</name>
</gene>
<accession>A4VP05</accession>
<keyword id="KW-0963">Cytoplasm</keyword>
<keyword id="KW-0489">Methyltransferase</keyword>
<keyword id="KW-1185">Reference proteome</keyword>
<keyword id="KW-0698">rRNA processing</keyword>
<keyword id="KW-0949">S-adenosyl-L-methionine</keyword>
<keyword id="KW-0808">Transferase</keyword>
<proteinExistence type="inferred from homology"/>